<gene>
    <name type="ordered locus">MJ0272</name>
</gene>
<name>Y272_METJA</name>
<keyword id="KW-0238">DNA-binding</keyword>
<keyword id="KW-1185">Reference proteome</keyword>
<keyword id="KW-0804">Transcription</keyword>
<keyword id="KW-0805">Transcription regulation</keyword>
<proteinExistence type="predicted"/>
<reference key="1">
    <citation type="journal article" date="1996" name="Science">
        <title>Complete genome sequence of the methanogenic archaeon, Methanococcus jannaschii.</title>
        <authorList>
            <person name="Bult C.J."/>
            <person name="White O."/>
            <person name="Olsen G.J."/>
            <person name="Zhou L."/>
            <person name="Fleischmann R.D."/>
            <person name="Sutton G.G."/>
            <person name="Blake J.A."/>
            <person name="FitzGerald L.M."/>
            <person name="Clayton R.A."/>
            <person name="Gocayne J.D."/>
            <person name="Kerlavage A.R."/>
            <person name="Dougherty B.A."/>
            <person name="Tomb J.-F."/>
            <person name="Adams M.D."/>
            <person name="Reich C.I."/>
            <person name="Overbeek R."/>
            <person name="Kirkness E.F."/>
            <person name="Weinstock K.G."/>
            <person name="Merrick J.M."/>
            <person name="Glodek A."/>
            <person name="Scott J.L."/>
            <person name="Geoghagen N.S.M."/>
            <person name="Weidman J.F."/>
            <person name="Fuhrmann J.L."/>
            <person name="Nguyen D."/>
            <person name="Utterback T.R."/>
            <person name="Kelley J.M."/>
            <person name="Peterson J.D."/>
            <person name="Sadow P.W."/>
            <person name="Hanna M.C."/>
            <person name="Cotton M.D."/>
            <person name="Roberts K.M."/>
            <person name="Hurst M.A."/>
            <person name="Kaine B.P."/>
            <person name="Borodovsky M."/>
            <person name="Klenk H.-P."/>
            <person name="Fraser C.M."/>
            <person name="Smith H.O."/>
            <person name="Woese C.R."/>
            <person name="Venter J.C."/>
        </authorList>
    </citation>
    <scope>NUCLEOTIDE SEQUENCE [LARGE SCALE GENOMIC DNA]</scope>
    <source>
        <strain>ATCC 43067 / DSM 2661 / JAL-1 / JCM 10045 / NBRC 100440</strain>
    </source>
</reference>
<feature type="chain" id="PRO_0000149789" description="Uncharacterized HTH-type transcriptional regulator MJ0272">
    <location>
        <begin position="1"/>
        <end position="66"/>
    </location>
</feature>
<feature type="domain" description="HTH cro/C1-type" evidence="1">
    <location>
        <begin position="5"/>
        <end position="59"/>
    </location>
</feature>
<feature type="DNA-binding region" description="H-T-H motif" evidence="1">
    <location>
        <begin position="16"/>
        <end position="35"/>
    </location>
</feature>
<sequence length="66" mass="7738">MKNKLKYYRALHNLTQEDLAKKLGVSRQTIIAIEKGKYDPSLKLAFKIAKFFGVKIEDIFIYEDDE</sequence>
<protein>
    <recommendedName>
        <fullName>Uncharacterized HTH-type transcriptional regulator MJ0272</fullName>
    </recommendedName>
</protein>
<accession>Q57720</accession>
<dbReference type="EMBL" id="L77117">
    <property type="protein sequence ID" value="AAB98257.1"/>
    <property type="status" value="ALT_INIT"/>
    <property type="molecule type" value="Genomic_DNA"/>
</dbReference>
<dbReference type="PIR" id="A64334">
    <property type="entry name" value="A64334"/>
</dbReference>
<dbReference type="RefSeq" id="WP_064496448.1">
    <property type="nucleotide sequence ID" value="NC_000909.1"/>
</dbReference>
<dbReference type="SMR" id="Q57720"/>
<dbReference type="STRING" id="243232.MJ_0272"/>
<dbReference type="PaxDb" id="243232-MJ_0272"/>
<dbReference type="EnsemblBacteria" id="AAB98257">
    <property type="protein sequence ID" value="AAB98257"/>
    <property type="gene ID" value="MJ_0272"/>
</dbReference>
<dbReference type="GeneID" id="1451126"/>
<dbReference type="KEGG" id="mja:MJ_0272"/>
<dbReference type="eggNOG" id="arCOG01864">
    <property type="taxonomic scope" value="Archaea"/>
</dbReference>
<dbReference type="HOGENOM" id="CLU_066192_44_1_2"/>
<dbReference type="InParanoid" id="Q57720"/>
<dbReference type="OrthoDB" id="67699at2157"/>
<dbReference type="PhylomeDB" id="Q57720"/>
<dbReference type="Proteomes" id="UP000000805">
    <property type="component" value="Chromosome"/>
</dbReference>
<dbReference type="GO" id="GO:0003677">
    <property type="term" value="F:DNA binding"/>
    <property type="evidence" value="ECO:0007669"/>
    <property type="project" value="UniProtKB-KW"/>
</dbReference>
<dbReference type="CDD" id="cd00093">
    <property type="entry name" value="HTH_XRE"/>
    <property type="match status" value="1"/>
</dbReference>
<dbReference type="Gene3D" id="1.10.260.40">
    <property type="entry name" value="lambda repressor-like DNA-binding domains"/>
    <property type="match status" value="1"/>
</dbReference>
<dbReference type="InterPro" id="IPR001387">
    <property type="entry name" value="Cro/C1-type_HTH"/>
</dbReference>
<dbReference type="InterPro" id="IPR010982">
    <property type="entry name" value="Lambda_DNA-bd_dom_sf"/>
</dbReference>
<dbReference type="PANTHER" id="PTHR46558:SF4">
    <property type="entry name" value="DNA-BIDING PHAGE PROTEIN"/>
    <property type="match status" value="1"/>
</dbReference>
<dbReference type="PANTHER" id="PTHR46558">
    <property type="entry name" value="TRACRIPTIONAL REGULATORY PROTEIN-RELATED-RELATED"/>
    <property type="match status" value="1"/>
</dbReference>
<dbReference type="Pfam" id="PF01381">
    <property type="entry name" value="HTH_3"/>
    <property type="match status" value="1"/>
</dbReference>
<dbReference type="SMART" id="SM00530">
    <property type="entry name" value="HTH_XRE"/>
    <property type="match status" value="1"/>
</dbReference>
<dbReference type="SUPFAM" id="SSF47413">
    <property type="entry name" value="lambda repressor-like DNA-binding domains"/>
    <property type="match status" value="1"/>
</dbReference>
<dbReference type="PROSITE" id="PS50943">
    <property type="entry name" value="HTH_CROC1"/>
    <property type="match status" value="1"/>
</dbReference>
<comment type="sequence caution" evidence="2">
    <conflict type="erroneous initiation">
        <sequence resource="EMBL-CDS" id="AAB98257"/>
    </conflict>
</comment>
<evidence type="ECO:0000255" key="1">
    <source>
        <dbReference type="PROSITE-ProRule" id="PRU00257"/>
    </source>
</evidence>
<evidence type="ECO:0000305" key="2"/>
<organism>
    <name type="scientific">Methanocaldococcus jannaschii (strain ATCC 43067 / DSM 2661 / JAL-1 / JCM 10045 / NBRC 100440)</name>
    <name type="common">Methanococcus jannaschii</name>
    <dbReference type="NCBI Taxonomy" id="243232"/>
    <lineage>
        <taxon>Archaea</taxon>
        <taxon>Methanobacteriati</taxon>
        <taxon>Methanobacteriota</taxon>
        <taxon>Methanomada group</taxon>
        <taxon>Methanococci</taxon>
        <taxon>Methanococcales</taxon>
        <taxon>Methanocaldococcaceae</taxon>
        <taxon>Methanocaldococcus</taxon>
    </lineage>
</organism>